<keyword id="KW-0472">Membrane</keyword>
<keyword id="KW-1185">Reference proteome</keyword>
<keyword id="KW-0812">Transmembrane</keyword>
<keyword id="KW-1133">Transmembrane helix</keyword>
<name>Y1386_METJA</name>
<gene>
    <name type="ordered locus">MJ1386</name>
</gene>
<feature type="chain" id="PRO_0000107305" description="Uncharacterized protein MJ1386">
    <location>
        <begin position="1"/>
        <end position="74"/>
    </location>
</feature>
<feature type="transmembrane region" description="Helical" evidence="1">
    <location>
        <begin position="52"/>
        <end position="72"/>
    </location>
</feature>
<comment type="subcellular location">
    <subcellularLocation>
        <location evidence="2">Membrane</location>
        <topology evidence="2">Single-pass membrane protein</topology>
    </subcellularLocation>
</comment>
<proteinExistence type="predicted"/>
<protein>
    <recommendedName>
        <fullName>Uncharacterized protein MJ1386</fullName>
    </recommendedName>
</protein>
<sequence>MKIYDAVVKTTFQISTSIFFDYIYFFDYKGMKMAEIFAVNNYTELKKIRRMITFGFTVLGLGIGMIFGDAGLDV</sequence>
<evidence type="ECO:0000255" key="1"/>
<evidence type="ECO:0000305" key="2"/>
<accession>Q58781</accession>
<organism>
    <name type="scientific">Methanocaldococcus jannaschii (strain ATCC 43067 / DSM 2661 / JAL-1 / JCM 10045 / NBRC 100440)</name>
    <name type="common">Methanococcus jannaschii</name>
    <dbReference type="NCBI Taxonomy" id="243232"/>
    <lineage>
        <taxon>Archaea</taxon>
        <taxon>Methanobacteriati</taxon>
        <taxon>Methanobacteriota</taxon>
        <taxon>Methanomada group</taxon>
        <taxon>Methanococci</taxon>
        <taxon>Methanococcales</taxon>
        <taxon>Methanocaldococcaceae</taxon>
        <taxon>Methanocaldococcus</taxon>
    </lineage>
</organism>
<dbReference type="EMBL" id="L77117">
    <property type="protein sequence ID" value="AAB99399.1"/>
    <property type="molecule type" value="Genomic_DNA"/>
</dbReference>
<dbReference type="PIR" id="A64473">
    <property type="entry name" value="A64473"/>
</dbReference>
<dbReference type="SMR" id="Q58781"/>
<dbReference type="STRING" id="243232.MJ_1386"/>
<dbReference type="PaxDb" id="243232-MJ_1386"/>
<dbReference type="EnsemblBacteria" id="AAB99399">
    <property type="protein sequence ID" value="AAB99399"/>
    <property type="gene ID" value="MJ_1386"/>
</dbReference>
<dbReference type="KEGG" id="mja:MJ_1386"/>
<dbReference type="HOGENOM" id="CLU_2678944_0_0_2"/>
<dbReference type="InParanoid" id="Q58781"/>
<dbReference type="Proteomes" id="UP000000805">
    <property type="component" value="Chromosome"/>
</dbReference>
<dbReference type="GO" id="GO:0016020">
    <property type="term" value="C:membrane"/>
    <property type="evidence" value="ECO:0007669"/>
    <property type="project" value="UniProtKB-SubCell"/>
</dbReference>
<reference key="1">
    <citation type="journal article" date="1996" name="Science">
        <title>Complete genome sequence of the methanogenic archaeon, Methanococcus jannaschii.</title>
        <authorList>
            <person name="Bult C.J."/>
            <person name="White O."/>
            <person name="Olsen G.J."/>
            <person name="Zhou L."/>
            <person name="Fleischmann R.D."/>
            <person name="Sutton G.G."/>
            <person name="Blake J.A."/>
            <person name="FitzGerald L.M."/>
            <person name="Clayton R.A."/>
            <person name="Gocayne J.D."/>
            <person name="Kerlavage A.R."/>
            <person name="Dougherty B.A."/>
            <person name="Tomb J.-F."/>
            <person name="Adams M.D."/>
            <person name="Reich C.I."/>
            <person name="Overbeek R."/>
            <person name="Kirkness E.F."/>
            <person name="Weinstock K.G."/>
            <person name="Merrick J.M."/>
            <person name="Glodek A."/>
            <person name="Scott J.L."/>
            <person name="Geoghagen N.S.M."/>
            <person name="Weidman J.F."/>
            <person name="Fuhrmann J.L."/>
            <person name="Nguyen D."/>
            <person name="Utterback T.R."/>
            <person name="Kelley J.M."/>
            <person name="Peterson J.D."/>
            <person name="Sadow P.W."/>
            <person name="Hanna M.C."/>
            <person name="Cotton M.D."/>
            <person name="Roberts K.M."/>
            <person name="Hurst M.A."/>
            <person name="Kaine B.P."/>
            <person name="Borodovsky M."/>
            <person name="Klenk H.-P."/>
            <person name="Fraser C.M."/>
            <person name="Smith H.O."/>
            <person name="Woese C.R."/>
            <person name="Venter J.C."/>
        </authorList>
    </citation>
    <scope>NUCLEOTIDE SEQUENCE [LARGE SCALE GENOMIC DNA]</scope>
    <source>
        <strain>ATCC 43067 / DSM 2661 / JAL-1 / JCM 10045 / NBRC 100440</strain>
    </source>
</reference>